<gene>
    <name type="primary">leuB</name>
</gene>
<name>LEU3_THETH</name>
<dbReference type="EC" id="1.1.1.85"/>
<dbReference type="PDB" id="1WAL">
    <property type="method" value="X-ray"/>
    <property type="resolution" value="2.27 A"/>
    <property type="chains" value="A=1-345"/>
</dbReference>
<dbReference type="PDBsum" id="1WAL"/>
<dbReference type="SASBDB" id="P61495"/>
<dbReference type="SMR" id="P61495"/>
<dbReference type="BRENDA" id="1.1.1.85">
    <property type="organism ID" value="2305"/>
</dbReference>
<dbReference type="UniPathway" id="UPA00048">
    <property type="reaction ID" value="UER00072"/>
</dbReference>
<dbReference type="EvolutionaryTrace" id="P61495"/>
<dbReference type="GO" id="GO:0005829">
    <property type="term" value="C:cytosol"/>
    <property type="evidence" value="ECO:0007669"/>
    <property type="project" value="TreeGrafter"/>
</dbReference>
<dbReference type="GO" id="GO:0003862">
    <property type="term" value="F:3-isopropylmalate dehydrogenase activity"/>
    <property type="evidence" value="ECO:0007669"/>
    <property type="project" value="UniProtKB-UniRule"/>
</dbReference>
<dbReference type="GO" id="GO:0000287">
    <property type="term" value="F:magnesium ion binding"/>
    <property type="evidence" value="ECO:0007669"/>
    <property type="project" value="InterPro"/>
</dbReference>
<dbReference type="GO" id="GO:0051287">
    <property type="term" value="F:NAD binding"/>
    <property type="evidence" value="ECO:0007669"/>
    <property type="project" value="InterPro"/>
</dbReference>
<dbReference type="GO" id="GO:0009098">
    <property type="term" value="P:L-leucine biosynthetic process"/>
    <property type="evidence" value="ECO:0007669"/>
    <property type="project" value="UniProtKB-UniRule"/>
</dbReference>
<dbReference type="FunFam" id="3.40.718.10:FF:000006">
    <property type="entry name" value="3-isopropylmalate dehydrogenase"/>
    <property type="match status" value="1"/>
</dbReference>
<dbReference type="Gene3D" id="3.40.718.10">
    <property type="entry name" value="Isopropylmalate Dehydrogenase"/>
    <property type="match status" value="1"/>
</dbReference>
<dbReference type="HAMAP" id="MF_01033">
    <property type="entry name" value="LeuB_type1"/>
    <property type="match status" value="1"/>
</dbReference>
<dbReference type="InterPro" id="IPR019818">
    <property type="entry name" value="IsoCit/isopropylmalate_DH_CS"/>
</dbReference>
<dbReference type="InterPro" id="IPR024084">
    <property type="entry name" value="IsoPropMal-DH-like_dom"/>
</dbReference>
<dbReference type="InterPro" id="IPR004429">
    <property type="entry name" value="Isopropylmalate_DH"/>
</dbReference>
<dbReference type="NCBIfam" id="TIGR00169">
    <property type="entry name" value="leuB"/>
    <property type="match status" value="1"/>
</dbReference>
<dbReference type="PANTHER" id="PTHR42979">
    <property type="entry name" value="3-ISOPROPYLMALATE DEHYDROGENASE"/>
    <property type="match status" value="1"/>
</dbReference>
<dbReference type="PANTHER" id="PTHR42979:SF1">
    <property type="entry name" value="3-ISOPROPYLMALATE DEHYDROGENASE"/>
    <property type="match status" value="1"/>
</dbReference>
<dbReference type="Pfam" id="PF00180">
    <property type="entry name" value="Iso_dh"/>
    <property type="match status" value="1"/>
</dbReference>
<dbReference type="SMART" id="SM01329">
    <property type="entry name" value="Iso_dh"/>
    <property type="match status" value="1"/>
</dbReference>
<dbReference type="SUPFAM" id="SSF53659">
    <property type="entry name" value="Isocitrate/Isopropylmalate dehydrogenase-like"/>
    <property type="match status" value="1"/>
</dbReference>
<dbReference type="PROSITE" id="PS00470">
    <property type="entry name" value="IDH_IMDH"/>
    <property type="match status" value="1"/>
</dbReference>
<protein>
    <recommendedName>
        <fullName>3-isopropylmalate dehydrogenase</fullName>
        <ecNumber>1.1.1.85</ecNumber>
    </recommendedName>
    <alternativeName>
        <fullName>3-IPM-DH</fullName>
    </alternativeName>
    <alternativeName>
        <fullName>Beta-IPM dehydrogenase</fullName>
        <shortName>IMDH</shortName>
    </alternativeName>
</protein>
<proteinExistence type="evidence at protein level"/>
<sequence length="345" mass="36651">MKVAVLPGDGIGPEVTEAALKVLRALDEAEGLGLAYEVFPFGGAAIDAFGEPFPEPTRKGVEEAEAVLLGSVGGPKWDGLPRKISPETGLLSLRKSQDLFANLRPAKVFPGLERLSPLKEEIARGVDVLIVRELTGGIYFGEPRGMSEAEAWNTERYSKPEVERVARVAFEAARKRRKHVVSVDKANVLEVGEFWRKTVEEVGRGYPDVALEHQYVDAAAMHLVRSPARFDVVVTGNIFGDILSDLASVLPGSLGLLPSASLGRGTPVFEPVHGSAPDIAGKGIANPTAAILSAAMMLEHAFGLVELARKVEDAVAKALLETPPPDLGGSAGTEAFTATVLRHLA</sequence>
<keyword id="KW-0002">3D-structure</keyword>
<keyword id="KW-0028">Amino-acid biosynthesis</keyword>
<keyword id="KW-0100">Branched-chain amino acid biosynthesis</keyword>
<keyword id="KW-0963">Cytoplasm</keyword>
<keyword id="KW-0432">Leucine biosynthesis</keyword>
<keyword id="KW-0460">Magnesium</keyword>
<keyword id="KW-0464">Manganese</keyword>
<keyword id="KW-0479">Metal-binding</keyword>
<keyword id="KW-0520">NAD</keyword>
<keyword id="KW-0560">Oxidoreductase</keyword>
<accession>P61495</accession>
<accession>P00351</accession>
<organism>
    <name type="scientific">Thermus thermophilus</name>
    <dbReference type="NCBI Taxonomy" id="274"/>
    <lineage>
        <taxon>Bacteria</taxon>
        <taxon>Thermotogati</taxon>
        <taxon>Deinococcota</taxon>
        <taxon>Deinococci</taxon>
        <taxon>Thermales</taxon>
        <taxon>Thermaceae</taxon>
        <taxon>Thermus</taxon>
    </lineage>
</organism>
<evidence type="ECO:0000250" key="1"/>
<evidence type="ECO:0000305" key="2"/>
<evidence type="ECO:0007829" key="3">
    <source>
        <dbReference type="PDB" id="1WAL"/>
    </source>
</evidence>
<reference key="1">
    <citation type="journal article" date="1997" name="J. Mol. Biol.">
        <title>Crystal structures of Escherichia coli and Salmonella typhimurium 3-isopropylmalate dehydrogenase and comparison with their thermophilic counterpart from Thermus thermophilus.</title>
        <authorList>
            <person name="Wallon G."/>
            <person name="Kryger G."/>
            <person name="Lovett S.T."/>
            <person name="Oshima T."/>
            <person name="Ringe D."/>
            <person name="Petsko G.A."/>
        </authorList>
    </citation>
    <scope>X-RAY CRYSTALLOGRAPHY (2.27 ANGSTROMS)</scope>
</reference>
<feature type="chain" id="PRO_0000083773" description="3-isopropylmalate dehydrogenase">
    <location>
        <begin position="1"/>
        <end position="345"/>
    </location>
</feature>
<feature type="binding site" evidence="1">
    <location>
        <begin position="74"/>
        <end position="87"/>
    </location>
    <ligand>
        <name>NAD(+)</name>
        <dbReference type="ChEBI" id="CHEBI:57540"/>
    </ligand>
</feature>
<feature type="binding site" evidence="1">
    <location>
        <position position="94"/>
    </location>
    <ligand>
        <name>substrate</name>
    </ligand>
</feature>
<feature type="binding site" evidence="1">
    <location>
        <position position="104"/>
    </location>
    <ligand>
        <name>substrate</name>
    </ligand>
</feature>
<feature type="binding site" evidence="1">
    <location>
        <position position="132"/>
    </location>
    <ligand>
        <name>substrate</name>
    </ligand>
</feature>
<feature type="binding site" evidence="1">
    <location>
        <position position="217"/>
    </location>
    <ligand>
        <name>Mg(2+)</name>
        <dbReference type="ChEBI" id="CHEBI:18420"/>
    </ligand>
</feature>
<feature type="binding site" evidence="1">
    <location>
        <position position="217"/>
    </location>
    <ligand>
        <name>substrate</name>
    </ligand>
</feature>
<feature type="binding site" evidence="1">
    <location>
        <position position="241"/>
    </location>
    <ligand>
        <name>Mg(2+)</name>
        <dbReference type="ChEBI" id="CHEBI:18420"/>
    </ligand>
</feature>
<feature type="binding site" evidence="1">
    <location>
        <position position="245"/>
    </location>
    <ligand>
        <name>Mg(2+)</name>
        <dbReference type="ChEBI" id="CHEBI:18420"/>
    </ligand>
</feature>
<feature type="binding site" evidence="1">
    <location>
        <begin position="274"/>
        <end position="286"/>
    </location>
    <ligand>
        <name>NAD(+)</name>
        <dbReference type="ChEBI" id="CHEBI:57540"/>
    </ligand>
</feature>
<feature type="site" description="Important for catalysis" evidence="1">
    <location>
        <position position="139"/>
    </location>
</feature>
<feature type="site" description="Important for catalysis" evidence="1">
    <location>
        <position position="185"/>
    </location>
</feature>
<feature type="strand" evidence="3">
    <location>
        <begin position="2"/>
        <end position="9"/>
    </location>
</feature>
<feature type="helix" evidence="3">
    <location>
        <begin position="12"/>
        <end position="30"/>
    </location>
</feature>
<feature type="strand" evidence="3">
    <location>
        <begin position="35"/>
        <end position="38"/>
    </location>
</feature>
<feature type="helix" evidence="3">
    <location>
        <begin position="43"/>
        <end position="49"/>
    </location>
</feature>
<feature type="strand" evidence="3">
    <location>
        <begin position="50"/>
        <end position="53"/>
    </location>
</feature>
<feature type="helix" evidence="3">
    <location>
        <begin position="55"/>
        <end position="63"/>
    </location>
</feature>
<feature type="strand" evidence="3">
    <location>
        <begin position="64"/>
        <end position="71"/>
    </location>
</feature>
<feature type="helix" evidence="3">
    <location>
        <begin position="75"/>
        <end position="77"/>
    </location>
</feature>
<feature type="helix" evidence="3">
    <location>
        <begin position="82"/>
        <end position="84"/>
    </location>
</feature>
<feature type="helix" evidence="3">
    <location>
        <begin position="86"/>
        <end position="97"/>
    </location>
</feature>
<feature type="strand" evidence="3">
    <location>
        <begin position="99"/>
        <end position="107"/>
    </location>
</feature>
<feature type="helix" evidence="3">
    <location>
        <begin position="113"/>
        <end position="115"/>
    </location>
</feature>
<feature type="strand" evidence="3">
    <location>
        <begin position="116"/>
        <end position="118"/>
    </location>
</feature>
<feature type="helix" evidence="3">
    <location>
        <begin position="120"/>
        <end position="123"/>
    </location>
</feature>
<feature type="strand" evidence="3">
    <location>
        <begin position="127"/>
        <end position="133"/>
    </location>
</feature>
<feature type="helix" evidence="3">
    <location>
        <begin position="137"/>
        <end position="139"/>
    </location>
</feature>
<feature type="helix" evidence="3">
    <location>
        <begin position="159"/>
        <end position="174"/>
    </location>
</feature>
<feature type="turn" evidence="3">
    <location>
        <begin position="175"/>
        <end position="177"/>
    </location>
</feature>
<feature type="strand" evidence="3">
    <location>
        <begin position="178"/>
        <end position="184"/>
    </location>
</feature>
<feature type="turn" evidence="3">
    <location>
        <begin position="186"/>
        <end position="188"/>
    </location>
</feature>
<feature type="helix" evidence="3">
    <location>
        <begin position="190"/>
        <end position="202"/>
    </location>
</feature>
<feature type="helix" evidence="3">
    <location>
        <begin position="203"/>
        <end position="205"/>
    </location>
</feature>
<feature type="strand" evidence="3">
    <location>
        <begin position="209"/>
        <end position="215"/>
    </location>
</feature>
<feature type="helix" evidence="3">
    <location>
        <begin position="216"/>
        <end position="225"/>
    </location>
</feature>
<feature type="helix" evidence="3">
    <location>
        <begin position="227"/>
        <end position="229"/>
    </location>
</feature>
<feature type="strand" evidence="3">
    <location>
        <begin position="231"/>
        <end position="235"/>
    </location>
</feature>
<feature type="helix" evidence="3">
    <location>
        <begin position="237"/>
        <end position="248"/>
    </location>
</feature>
<feature type="turn" evidence="3">
    <location>
        <begin position="249"/>
        <end position="251"/>
    </location>
</feature>
<feature type="helix" evidence="3">
    <location>
        <begin position="254"/>
        <end position="256"/>
    </location>
</feature>
<feature type="strand" evidence="3">
    <location>
        <begin position="258"/>
        <end position="265"/>
    </location>
</feature>
<feature type="strand" evidence="3">
    <location>
        <begin position="268"/>
        <end position="273"/>
    </location>
</feature>
<feature type="helix" evidence="3">
    <location>
        <begin position="277"/>
        <end position="279"/>
    </location>
</feature>
<feature type="helix" evidence="3">
    <location>
        <begin position="288"/>
        <end position="302"/>
    </location>
</feature>
<feature type="helix" evidence="3">
    <location>
        <begin position="305"/>
        <end position="321"/>
    </location>
</feature>
<feature type="helix" evidence="3">
    <location>
        <begin position="325"/>
        <end position="327"/>
    </location>
</feature>
<feature type="helix" evidence="3">
    <location>
        <begin position="333"/>
        <end position="344"/>
    </location>
</feature>
<comment type="function">
    <text>Catalyzes the oxidation of 3-carboxy-2-hydroxy-4-methylpentanoate (3-isopropylmalate) to 3-carboxy-4-methyl-2-oxopentanoate. The product decarboxylates to 4-methyl-2 oxopentanoate.</text>
</comment>
<comment type="catalytic activity">
    <reaction>
        <text>(2R,3S)-3-isopropylmalate + NAD(+) = 4-methyl-2-oxopentanoate + CO2 + NADH</text>
        <dbReference type="Rhea" id="RHEA:32271"/>
        <dbReference type="ChEBI" id="CHEBI:16526"/>
        <dbReference type="ChEBI" id="CHEBI:17865"/>
        <dbReference type="ChEBI" id="CHEBI:35121"/>
        <dbReference type="ChEBI" id="CHEBI:57540"/>
        <dbReference type="ChEBI" id="CHEBI:57945"/>
        <dbReference type="EC" id="1.1.1.85"/>
    </reaction>
</comment>
<comment type="cofactor">
    <cofactor>
        <name>Mg(2+)</name>
        <dbReference type="ChEBI" id="CHEBI:18420"/>
    </cofactor>
    <cofactor>
        <name>Mn(2+)</name>
        <dbReference type="ChEBI" id="CHEBI:29035"/>
    </cofactor>
    <text>Binds 1 Mg(2+) or Mn(2+) ion per subunit.</text>
</comment>
<comment type="pathway">
    <text>Amino-acid biosynthesis; L-leucine biosynthesis; L-leucine from 3-methyl-2-oxobutanoate: step 3/4.</text>
</comment>
<comment type="subunit">
    <text>Homodimer.</text>
</comment>
<comment type="subcellular location">
    <subcellularLocation>
        <location>Cytoplasm</location>
    </subcellularLocation>
</comment>
<comment type="similarity">
    <text evidence="2">Belongs to the isocitrate and isopropylmalate dehydrogenases family. LeuB type 1 subfamily.</text>
</comment>
<comment type="caution">
    <text evidence="2">The sequence shown here has been extracted from PDB entry 1WAL.</text>
</comment>